<comment type="function">
    <text evidence="4">Required for respiratory activity and maintenance and expression of the mitochondrial genome.</text>
</comment>
<comment type="subcellular location">
    <subcellularLocation>
        <location evidence="1">Mitochondrion</location>
    </subcellularLocation>
</comment>
<comment type="disruption phenotype">
    <text evidence="3">Decrease in plasma membrane electron transport.</text>
</comment>
<comment type="miscellaneous">
    <text evidence="2">Present with 2140 molecules/cell in log phase SD medium.</text>
</comment>
<comment type="similarity">
    <text evidence="5">Belongs to the RRG8 family.</text>
</comment>
<sequence length="277" mass="31133">MGLPKSAYKKLLIDCPTRVINKNCAQRVKDVSPLITNFEKWSDKRKKLYFKDEEEMVGQFHLENFNLKNNLYGRLLASPMRAEKISKLKSCRELLIPLKVVPSTGKDQHADKDKLKLVPTLDYSKSYKSSYVLNSASIVQDNLAAATSWFPISVLQTSTPKSLEVDSSTFITEYNANLHAFIKARLSVIPNVGPSSINRVLLICDKRKTPPIEIQVVSHGKGLPITQSVFNLGYLHEPTLEAIVSKDAVTNGIYLDADNDKDLIKHLYSTLLFHSVN</sequence>
<organism>
    <name type="scientific">Saccharomyces cerevisiae (strain ATCC 204508 / S288c)</name>
    <name type="common">Baker's yeast</name>
    <dbReference type="NCBI Taxonomy" id="559292"/>
    <lineage>
        <taxon>Eukaryota</taxon>
        <taxon>Fungi</taxon>
        <taxon>Dikarya</taxon>
        <taxon>Ascomycota</taxon>
        <taxon>Saccharomycotina</taxon>
        <taxon>Saccharomycetes</taxon>
        <taxon>Saccharomycetales</taxon>
        <taxon>Saccharomycetaceae</taxon>
        <taxon>Saccharomyces</taxon>
    </lineage>
</organism>
<name>RRG8_YEAST</name>
<reference key="1">
    <citation type="journal article" date="1997" name="Nature">
        <title>The nucleotide sequence of Saccharomyces cerevisiae chromosome XVI.</title>
        <authorList>
            <person name="Bussey H."/>
            <person name="Storms R.K."/>
            <person name="Ahmed A."/>
            <person name="Albermann K."/>
            <person name="Allen E."/>
            <person name="Ansorge W."/>
            <person name="Araujo R."/>
            <person name="Aparicio A."/>
            <person name="Barrell B.G."/>
            <person name="Badcock K."/>
            <person name="Benes V."/>
            <person name="Botstein D."/>
            <person name="Bowman S."/>
            <person name="Brueckner M."/>
            <person name="Carpenter J."/>
            <person name="Cherry J.M."/>
            <person name="Chung E."/>
            <person name="Churcher C.M."/>
            <person name="Coster F."/>
            <person name="Davis K."/>
            <person name="Davis R.W."/>
            <person name="Dietrich F.S."/>
            <person name="Delius H."/>
            <person name="DiPaolo T."/>
            <person name="Dubois E."/>
            <person name="Duesterhoeft A."/>
            <person name="Duncan M."/>
            <person name="Floeth M."/>
            <person name="Fortin N."/>
            <person name="Friesen J.D."/>
            <person name="Fritz C."/>
            <person name="Goffeau A."/>
            <person name="Hall J."/>
            <person name="Hebling U."/>
            <person name="Heumann K."/>
            <person name="Hilbert H."/>
            <person name="Hillier L.W."/>
            <person name="Hunicke-Smith S."/>
            <person name="Hyman R.W."/>
            <person name="Johnston M."/>
            <person name="Kalman S."/>
            <person name="Kleine K."/>
            <person name="Komp C."/>
            <person name="Kurdi O."/>
            <person name="Lashkari D."/>
            <person name="Lew H."/>
            <person name="Lin A."/>
            <person name="Lin D."/>
            <person name="Louis E.J."/>
            <person name="Marathe R."/>
            <person name="Messenguy F."/>
            <person name="Mewes H.-W."/>
            <person name="Mirtipati S."/>
            <person name="Moestl D."/>
            <person name="Mueller-Auer S."/>
            <person name="Namath A."/>
            <person name="Nentwich U."/>
            <person name="Oefner P."/>
            <person name="Pearson D."/>
            <person name="Petel F.X."/>
            <person name="Pohl T.M."/>
            <person name="Purnelle B."/>
            <person name="Rajandream M.A."/>
            <person name="Rechmann S."/>
            <person name="Rieger M."/>
            <person name="Riles L."/>
            <person name="Roberts D."/>
            <person name="Schaefer M."/>
            <person name="Scharfe M."/>
            <person name="Scherens B."/>
            <person name="Schramm S."/>
            <person name="Schroeder M."/>
            <person name="Sdicu A.-M."/>
            <person name="Tettelin H."/>
            <person name="Urrestarazu L.A."/>
            <person name="Ushinsky S."/>
            <person name="Vierendeels F."/>
            <person name="Vissers S."/>
            <person name="Voss H."/>
            <person name="Walsh S.V."/>
            <person name="Wambutt R."/>
            <person name="Wang Y."/>
            <person name="Wedler E."/>
            <person name="Wedler H."/>
            <person name="Winnett E."/>
            <person name="Zhong W.-W."/>
            <person name="Zollner A."/>
            <person name="Vo D.H."/>
            <person name="Hani J."/>
        </authorList>
    </citation>
    <scope>NUCLEOTIDE SEQUENCE [LARGE SCALE GENOMIC DNA]</scope>
    <source>
        <strain>ATCC 204508 / S288c</strain>
    </source>
</reference>
<reference key="2">
    <citation type="journal article" date="2014" name="G3 (Bethesda)">
        <title>The reference genome sequence of Saccharomyces cerevisiae: Then and now.</title>
        <authorList>
            <person name="Engel S.R."/>
            <person name="Dietrich F.S."/>
            <person name="Fisk D.G."/>
            <person name="Binkley G."/>
            <person name="Balakrishnan R."/>
            <person name="Costanzo M.C."/>
            <person name="Dwight S.S."/>
            <person name="Hitz B.C."/>
            <person name="Karra K."/>
            <person name="Nash R.S."/>
            <person name="Weng S."/>
            <person name="Wong E.D."/>
            <person name="Lloyd P."/>
            <person name="Skrzypek M.S."/>
            <person name="Miyasato S.R."/>
            <person name="Simison M."/>
            <person name="Cherry J.M."/>
        </authorList>
    </citation>
    <scope>GENOME REANNOTATION</scope>
    <source>
        <strain>ATCC 204508 / S288c</strain>
    </source>
</reference>
<reference key="3">
    <citation type="journal article" date="2003" name="Nature">
        <title>Global analysis of protein localization in budding yeast.</title>
        <authorList>
            <person name="Huh W.-K."/>
            <person name="Falvo J.V."/>
            <person name="Gerke L.C."/>
            <person name="Carroll A.S."/>
            <person name="Howson R.W."/>
            <person name="Weissman J.S."/>
            <person name="O'Shea E.K."/>
        </authorList>
    </citation>
    <scope>SUBCELLULAR LOCATION [LARGE SCALE ANALYSIS]</scope>
</reference>
<reference key="4">
    <citation type="journal article" date="2003" name="Nature">
        <title>Global analysis of protein expression in yeast.</title>
        <authorList>
            <person name="Ghaemmaghami S."/>
            <person name="Huh W.-K."/>
            <person name="Bower K."/>
            <person name="Howson R.W."/>
            <person name="Belle A."/>
            <person name="Dephoure N."/>
            <person name="O'Shea E.K."/>
            <person name="Weissman J.S."/>
        </authorList>
    </citation>
    <scope>LEVEL OF PROTEIN EXPRESSION [LARGE SCALE ANALYSIS]</scope>
</reference>
<reference key="5">
    <citation type="journal article" date="2008" name="FEMS Yeast Res.">
        <title>Plasma membrane electron transport in Saccharomyces cerevisiae depends on the presence of mitochondrial respiratory subunits.</title>
        <authorList>
            <person name="Herst P.M."/>
            <person name="Perrone G.G."/>
            <person name="Dawes I.W."/>
            <person name="Bircham P.W."/>
            <person name="Berridge M.V."/>
        </authorList>
    </citation>
    <scope>DISRUPTION PHENOTYPE</scope>
</reference>
<reference key="6">
    <citation type="journal article" date="2009" name="Genome Biol.">
        <title>Genome-wide deletion mutant analysis reveals genes required for respiratory growth, mitochondrial genome maintenance and mitochondrial protein synthesis in Saccharomyces cerevisiae.</title>
        <authorList>
            <person name="Merz S."/>
            <person name="Westermann B."/>
        </authorList>
    </citation>
    <scope>FUNCTION</scope>
</reference>
<keyword id="KW-0496">Mitochondrion</keyword>
<keyword id="KW-1185">Reference proteome</keyword>
<feature type="chain" id="PRO_0000242626" description="Required for respiratory growth protein 8, mitochondrial">
    <location>
        <begin position="1"/>
        <end position="277"/>
    </location>
</feature>
<gene>
    <name type="primary">RRG8</name>
    <name type="ordered locus">YPR116W</name>
</gene>
<evidence type="ECO:0000269" key="1">
    <source>
    </source>
</evidence>
<evidence type="ECO:0000269" key="2">
    <source>
    </source>
</evidence>
<evidence type="ECO:0000269" key="3">
    <source>
    </source>
</evidence>
<evidence type="ECO:0000269" key="4">
    <source>
    </source>
</evidence>
<evidence type="ECO:0000305" key="5"/>
<dbReference type="EMBL" id="U32445">
    <property type="protein sequence ID" value="AAB68086.1"/>
    <property type="molecule type" value="Genomic_DNA"/>
</dbReference>
<dbReference type="EMBL" id="BK006949">
    <property type="protein sequence ID" value="DAA11531.1"/>
    <property type="molecule type" value="Genomic_DNA"/>
</dbReference>
<dbReference type="PIR" id="S59781">
    <property type="entry name" value="S59781"/>
</dbReference>
<dbReference type="RefSeq" id="NP_015441.1">
    <property type="nucleotide sequence ID" value="NM_001184213.1"/>
</dbReference>
<dbReference type="BioGRID" id="36283">
    <property type="interactions" value="24"/>
</dbReference>
<dbReference type="FunCoup" id="Q06109">
    <property type="interactions" value="44"/>
</dbReference>
<dbReference type="IntAct" id="Q06109">
    <property type="interactions" value="13"/>
</dbReference>
<dbReference type="MINT" id="Q06109"/>
<dbReference type="STRING" id="4932.YPR116W"/>
<dbReference type="PaxDb" id="4932-YPR116W"/>
<dbReference type="PeptideAtlas" id="Q06109"/>
<dbReference type="EnsemblFungi" id="YPR116W_mRNA">
    <property type="protein sequence ID" value="YPR116W"/>
    <property type="gene ID" value="YPR116W"/>
</dbReference>
<dbReference type="GeneID" id="856232"/>
<dbReference type="KEGG" id="sce:YPR116W"/>
<dbReference type="AGR" id="SGD:S000006320"/>
<dbReference type="SGD" id="S000006320">
    <property type="gene designation" value="RRG8"/>
</dbReference>
<dbReference type="VEuPathDB" id="FungiDB:YPR116W"/>
<dbReference type="eggNOG" id="ENOG502S46Y">
    <property type="taxonomic scope" value="Eukaryota"/>
</dbReference>
<dbReference type="HOGENOM" id="CLU_090059_0_0_1"/>
<dbReference type="InParanoid" id="Q06109"/>
<dbReference type="OMA" id="FHRWAGK"/>
<dbReference type="OrthoDB" id="4035333at2759"/>
<dbReference type="BioCyc" id="YEAST:G3O-34255-MONOMER"/>
<dbReference type="BioGRID-ORCS" id="856232">
    <property type="hits" value="0 hits in 10 CRISPR screens"/>
</dbReference>
<dbReference type="PRO" id="PR:Q06109"/>
<dbReference type="Proteomes" id="UP000002311">
    <property type="component" value="Chromosome XVI"/>
</dbReference>
<dbReference type="RNAct" id="Q06109">
    <property type="molecule type" value="protein"/>
</dbReference>
<dbReference type="GO" id="GO:0099617">
    <property type="term" value="C:matrix side of mitochondrial inner membrane"/>
    <property type="evidence" value="ECO:0000314"/>
    <property type="project" value="SGD"/>
</dbReference>
<dbReference type="GO" id="GO:0005739">
    <property type="term" value="C:mitochondrion"/>
    <property type="evidence" value="ECO:0007005"/>
    <property type="project" value="SGD"/>
</dbReference>
<dbReference type="GO" id="GO:0000002">
    <property type="term" value="P:mitochondrial genome maintenance"/>
    <property type="evidence" value="ECO:0000315"/>
    <property type="project" value="SGD"/>
</dbReference>
<dbReference type="GO" id="GO:0097745">
    <property type="term" value="P:mitochondrial tRNA 5'-end processing"/>
    <property type="evidence" value="ECO:0000315"/>
    <property type="project" value="SGD"/>
</dbReference>
<dbReference type="InterPro" id="IPR031415">
    <property type="entry name" value="Rrg8"/>
</dbReference>
<dbReference type="Pfam" id="PF17068">
    <property type="entry name" value="RRG8"/>
    <property type="match status" value="1"/>
</dbReference>
<accession>Q06109</accession>
<accession>D6W4B5</accession>
<proteinExistence type="evidence at protein level"/>
<protein>
    <recommendedName>
        <fullName>Required for respiratory growth protein 8, mitochondrial</fullName>
    </recommendedName>
</protein>